<sequence length="82" mass="9404">MSRKRPQPPVKPFKKKPNPLKAAKVTEIDYKDVALLRKFISDRGKIRSRRITGVTVQEQRELSKAIKNAREMALLPYATSGR</sequence>
<evidence type="ECO:0000255" key="1">
    <source>
        <dbReference type="HAMAP-Rule" id="MF_00270"/>
    </source>
</evidence>
<evidence type="ECO:0000305" key="2"/>
<feature type="chain" id="PRO_0000111121" description="Small ribosomal subunit protein bS18">
    <location>
        <begin position="1"/>
        <end position="82"/>
    </location>
</feature>
<reference key="1">
    <citation type="journal article" date="2002" name="Proc. Natl. Acad. Sci. U.S.A.">
        <title>The genome sequence of Bifidobacterium longum reflects its adaptation to the human gastrointestinal tract.</title>
        <authorList>
            <person name="Schell M.A."/>
            <person name="Karmirantzou M."/>
            <person name="Snel B."/>
            <person name="Vilanova D."/>
            <person name="Berger B."/>
            <person name="Pessi G."/>
            <person name="Zwahlen M.-C."/>
            <person name="Desiere F."/>
            <person name="Bork P."/>
            <person name="Delley M."/>
            <person name="Pridmore R.D."/>
            <person name="Arigoni F."/>
        </authorList>
    </citation>
    <scope>NUCLEOTIDE SEQUENCE [LARGE SCALE GENOMIC DNA]</scope>
    <source>
        <strain>NCC 2705</strain>
    </source>
</reference>
<protein>
    <recommendedName>
        <fullName evidence="1">Small ribosomal subunit protein bS18</fullName>
    </recommendedName>
    <alternativeName>
        <fullName evidence="2">30S ribosomal protein S18</fullName>
    </alternativeName>
</protein>
<organism>
    <name type="scientific">Bifidobacterium longum (strain NCC 2705)</name>
    <dbReference type="NCBI Taxonomy" id="206672"/>
    <lineage>
        <taxon>Bacteria</taxon>
        <taxon>Bacillati</taxon>
        <taxon>Actinomycetota</taxon>
        <taxon>Actinomycetes</taxon>
        <taxon>Bifidobacteriales</taxon>
        <taxon>Bifidobacteriaceae</taxon>
        <taxon>Bifidobacterium</taxon>
    </lineage>
</organism>
<gene>
    <name evidence="1" type="primary">rpsR</name>
    <name type="ordered locus">BL0414</name>
</gene>
<accession>Q8G758</accession>
<comment type="function">
    <text evidence="1">Binds as a heterodimer with protein bS6 to the central domain of the 16S rRNA, where it helps stabilize the platform of the 30S subunit.</text>
</comment>
<comment type="subunit">
    <text evidence="1">Part of the 30S ribosomal subunit. Forms a tight heterodimer with protein bS6.</text>
</comment>
<comment type="similarity">
    <text evidence="1">Belongs to the bacterial ribosomal protein bS18 family.</text>
</comment>
<proteinExistence type="inferred from homology"/>
<dbReference type="EMBL" id="AE014295">
    <property type="protein sequence ID" value="AAN24251.1"/>
    <property type="molecule type" value="Genomic_DNA"/>
</dbReference>
<dbReference type="RefSeq" id="NP_695615.1">
    <property type="nucleotide sequence ID" value="NC_004307.2"/>
</dbReference>
<dbReference type="RefSeq" id="WP_007051545.1">
    <property type="nucleotide sequence ID" value="NC_004307.2"/>
</dbReference>
<dbReference type="SMR" id="Q8G758"/>
<dbReference type="STRING" id="206672.BL0414"/>
<dbReference type="EnsemblBacteria" id="AAN24251">
    <property type="protein sequence ID" value="AAN24251"/>
    <property type="gene ID" value="BL0414"/>
</dbReference>
<dbReference type="GeneID" id="69577461"/>
<dbReference type="KEGG" id="blo:BL0414"/>
<dbReference type="PATRIC" id="fig|206672.9.peg.1159"/>
<dbReference type="HOGENOM" id="CLU_148710_1_0_11"/>
<dbReference type="OrthoDB" id="9812008at2"/>
<dbReference type="PhylomeDB" id="Q8G758"/>
<dbReference type="Proteomes" id="UP000000439">
    <property type="component" value="Chromosome"/>
</dbReference>
<dbReference type="GO" id="GO:0022627">
    <property type="term" value="C:cytosolic small ribosomal subunit"/>
    <property type="evidence" value="ECO:0007669"/>
    <property type="project" value="TreeGrafter"/>
</dbReference>
<dbReference type="GO" id="GO:0070181">
    <property type="term" value="F:small ribosomal subunit rRNA binding"/>
    <property type="evidence" value="ECO:0007669"/>
    <property type="project" value="TreeGrafter"/>
</dbReference>
<dbReference type="GO" id="GO:0003735">
    <property type="term" value="F:structural constituent of ribosome"/>
    <property type="evidence" value="ECO:0007669"/>
    <property type="project" value="InterPro"/>
</dbReference>
<dbReference type="GO" id="GO:0006412">
    <property type="term" value="P:translation"/>
    <property type="evidence" value="ECO:0007669"/>
    <property type="project" value="UniProtKB-UniRule"/>
</dbReference>
<dbReference type="FunFam" id="4.10.640.10:FF:000016">
    <property type="entry name" value="30S ribosomal protein S18"/>
    <property type="match status" value="1"/>
</dbReference>
<dbReference type="Gene3D" id="4.10.640.10">
    <property type="entry name" value="Ribosomal protein S18"/>
    <property type="match status" value="1"/>
</dbReference>
<dbReference type="HAMAP" id="MF_00270">
    <property type="entry name" value="Ribosomal_bS18"/>
    <property type="match status" value="1"/>
</dbReference>
<dbReference type="InterPro" id="IPR001648">
    <property type="entry name" value="Ribosomal_bS18"/>
</dbReference>
<dbReference type="InterPro" id="IPR018275">
    <property type="entry name" value="Ribosomal_bS18_CS"/>
</dbReference>
<dbReference type="InterPro" id="IPR036870">
    <property type="entry name" value="Ribosomal_bS18_sf"/>
</dbReference>
<dbReference type="NCBIfam" id="TIGR00165">
    <property type="entry name" value="S18"/>
    <property type="match status" value="1"/>
</dbReference>
<dbReference type="PANTHER" id="PTHR13479">
    <property type="entry name" value="30S RIBOSOMAL PROTEIN S18"/>
    <property type="match status" value="1"/>
</dbReference>
<dbReference type="PANTHER" id="PTHR13479:SF40">
    <property type="entry name" value="SMALL RIBOSOMAL SUBUNIT PROTEIN BS18M"/>
    <property type="match status" value="1"/>
</dbReference>
<dbReference type="Pfam" id="PF01084">
    <property type="entry name" value="Ribosomal_S18"/>
    <property type="match status" value="1"/>
</dbReference>
<dbReference type="PRINTS" id="PR00974">
    <property type="entry name" value="RIBOSOMALS18"/>
</dbReference>
<dbReference type="SUPFAM" id="SSF46911">
    <property type="entry name" value="Ribosomal protein S18"/>
    <property type="match status" value="1"/>
</dbReference>
<dbReference type="PROSITE" id="PS00057">
    <property type="entry name" value="RIBOSOMAL_S18"/>
    <property type="match status" value="1"/>
</dbReference>
<keyword id="KW-1185">Reference proteome</keyword>
<keyword id="KW-0687">Ribonucleoprotein</keyword>
<keyword id="KW-0689">Ribosomal protein</keyword>
<keyword id="KW-0694">RNA-binding</keyword>
<keyword id="KW-0699">rRNA-binding</keyword>
<name>RS18_BIFLO</name>